<feature type="chain" id="PRO_1000201316" description="tRNA U34 carboxymethyltransferase">
    <location>
        <begin position="1"/>
        <end position="323"/>
    </location>
</feature>
<feature type="binding site" evidence="1">
    <location>
        <position position="91"/>
    </location>
    <ligand>
        <name>carboxy-S-adenosyl-L-methionine</name>
        <dbReference type="ChEBI" id="CHEBI:134278"/>
    </ligand>
</feature>
<feature type="binding site" evidence="1">
    <location>
        <position position="105"/>
    </location>
    <ligand>
        <name>carboxy-S-adenosyl-L-methionine</name>
        <dbReference type="ChEBI" id="CHEBI:134278"/>
    </ligand>
</feature>
<feature type="binding site" evidence="1">
    <location>
        <position position="110"/>
    </location>
    <ligand>
        <name>carboxy-S-adenosyl-L-methionine</name>
        <dbReference type="ChEBI" id="CHEBI:134278"/>
    </ligand>
</feature>
<feature type="binding site" evidence="1">
    <location>
        <position position="130"/>
    </location>
    <ligand>
        <name>carboxy-S-adenosyl-L-methionine</name>
        <dbReference type="ChEBI" id="CHEBI:134278"/>
    </ligand>
</feature>
<feature type="binding site" evidence="1">
    <location>
        <begin position="181"/>
        <end position="182"/>
    </location>
    <ligand>
        <name>carboxy-S-adenosyl-L-methionine</name>
        <dbReference type="ChEBI" id="CHEBI:134278"/>
    </ligand>
</feature>
<feature type="binding site" evidence="1">
    <location>
        <position position="196"/>
    </location>
    <ligand>
        <name>carboxy-S-adenosyl-L-methionine</name>
        <dbReference type="ChEBI" id="CHEBI:134278"/>
    </ligand>
</feature>
<feature type="binding site" evidence="1">
    <location>
        <position position="200"/>
    </location>
    <ligand>
        <name>carboxy-S-adenosyl-L-methionine</name>
        <dbReference type="ChEBI" id="CHEBI:134278"/>
    </ligand>
</feature>
<feature type="binding site" evidence="1">
    <location>
        <position position="315"/>
    </location>
    <ligand>
        <name>carboxy-S-adenosyl-L-methionine</name>
        <dbReference type="ChEBI" id="CHEBI:134278"/>
    </ligand>
</feature>
<accession>A9QYY2</accession>
<keyword id="KW-0808">Transferase</keyword>
<keyword id="KW-0819">tRNA processing</keyword>
<sequence>MIEFGDFYRLIAKGPLSPWLDTLPAQLSAWQRESLHGKFKTWFNAVEHLPQLTPTTLDLHSGVRAEMSPPISAGQREGMENMLRALMPWRKGPFSLYGLDIDTEWRSDWKWQRVLPHISPLAGRTILDVGCGSGYHLWRMIGEGAHLAVGIDPMQLFLCQFEAIRKLLGGDQRAHVLPLGIEQLPELAAFDTVFSMGVLYHRRSPLDHLYQLKNQLVTDGELVLETLVVEGDSQQVLVPGDRYAQMRNVYFIPSAPALKAWLEKCGFVDVRIADMAVTTTEEQRRTDWMTSESLAEFLDPHDHSKTVEGYPAPLRAVLIARKP</sequence>
<reference key="1">
    <citation type="journal article" date="2010" name="J. Bacteriol.">
        <title>Genome sequence of the deep-rooted Yersinia pestis strain Angola reveals new insights into the evolution and pangenome of the plague bacterium.</title>
        <authorList>
            <person name="Eppinger M."/>
            <person name="Worsham P.L."/>
            <person name="Nikolich M.P."/>
            <person name="Riley D.R."/>
            <person name="Sebastian Y."/>
            <person name="Mou S."/>
            <person name="Achtman M."/>
            <person name="Lindler L.E."/>
            <person name="Ravel J."/>
        </authorList>
    </citation>
    <scope>NUCLEOTIDE SEQUENCE [LARGE SCALE GENOMIC DNA]</scope>
    <source>
        <strain>Angola</strain>
    </source>
</reference>
<comment type="function">
    <text evidence="1">Catalyzes carboxymethyl transfer from carboxy-S-adenosyl-L-methionine (Cx-SAM) to 5-hydroxyuridine (ho5U) to form 5-carboxymethoxyuridine (cmo5U) at position 34 in tRNAs.</text>
</comment>
<comment type="catalytic activity">
    <reaction evidence="1">
        <text>carboxy-S-adenosyl-L-methionine + 5-hydroxyuridine(34) in tRNA = 5-carboxymethoxyuridine(34) in tRNA + S-adenosyl-L-homocysteine + H(+)</text>
        <dbReference type="Rhea" id="RHEA:52848"/>
        <dbReference type="Rhea" id="RHEA-COMP:13381"/>
        <dbReference type="Rhea" id="RHEA-COMP:13383"/>
        <dbReference type="ChEBI" id="CHEBI:15378"/>
        <dbReference type="ChEBI" id="CHEBI:57856"/>
        <dbReference type="ChEBI" id="CHEBI:134278"/>
        <dbReference type="ChEBI" id="CHEBI:136877"/>
        <dbReference type="ChEBI" id="CHEBI:136879"/>
    </reaction>
</comment>
<comment type="subunit">
    <text evidence="1">Homotetramer.</text>
</comment>
<comment type="similarity">
    <text evidence="1">Belongs to the class I-like SAM-binding methyltransferase superfamily. CmoB family.</text>
</comment>
<gene>
    <name evidence="1" type="primary">cmoB</name>
    <name type="ordered locus">YpAngola_A2430</name>
</gene>
<name>CMOB_YERPG</name>
<dbReference type="EC" id="2.5.1.-" evidence="1"/>
<dbReference type="EMBL" id="CP000901">
    <property type="protein sequence ID" value="ABX88098.1"/>
    <property type="molecule type" value="Genomic_DNA"/>
</dbReference>
<dbReference type="RefSeq" id="WP_002211208.1">
    <property type="nucleotide sequence ID" value="NZ_CP009935.1"/>
</dbReference>
<dbReference type="SMR" id="A9QYY2"/>
<dbReference type="GeneID" id="57976612"/>
<dbReference type="KEGG" id="ypg:YpAngola_A2430"/>
<dbReference type="PATRIC" id="fig|349746.12.peg.3447"/>
<dbReference type="GO" id="GO:0008168">
    <property type="term" value="F:methyltransferase activity"/>
    <property type="evidence" value="ECO:0007669"/>
    <property type="project" value="TreeGrafter"/>
</dbReference>
<dbReference type="GO" id="GO:0016765">
    <property type="term" value="F:transferase activity, transferring alkyl or aryl (other than methyl) groups"/>
    <property type="evidence" value="ECO:0007669"/>
    <property type="project" value="UniProtKB-UniRule"/>
</dbReference>
<dbReference type="GO" id="GO:0002098">
    <property type="term" value="P:tRNA wobble uridine modification"/>
    <property type="evidence" value="ECO:0007669"/>
    <property type="project" value="InterPro"/>
</dbReference>
<dbReference type="CDD" id="cd02440">
    <property type="entry name" value="AdoMet_MTases"/>
    <property type="match status" value="1"/>
</dbReference>
<dbReference type="Gene3D" id="3.40.50.150">
    <property type="entry name" value="Vaccinia Virus protein VP39"/>
    <property type="match status" value="1"/>
</dbReference>
<dbReference type="HAMAP" id="MF_01590">
    <property type="entry name" value="tRNA_carboxymethyltr_CmoB"/>
    <property type="match status" value="1"/>
</dbReference>
<dbReference type="InterPro" id="IPR010017">
    <property type="entry name" value="CmoB"/>
</dbReference>
<dbReference type="InterPro" id="IPR027555">
    <property type="entry name" value="Mo5U34_MeTrfas-like"/>
</dbReference>
<dbReference type="InterPro" id="IPR029063">
    <property type="entry name" value="SAM-dependent_MTases_sf"/>
</dbReference>
<dbReference type="NCBIfam" id="NF011650">
    <property type="entry name" value="PRK15068.1"/>
    <property type="match status" value="1"/>
</dbReference>
<dbReference type="NCBIfam" id="TIGR00452">
    <property type="entry name" value="tRNA 5-methoxyuridine(34)/uridine 5-oxyacetic acid(34) synthase CmoB"/>
    <property type="match status" value="1"/>
</dbReference>
<dbReference type="PANTHER" id="PTHR43464">
    <property type="entry name" value="METHYLTRANSFERASE"/>
    <property type="match status" value="1"/>
</dbReference>
<dbReference type="PANTHER" id="PTHR43464:SF95">
    <property type="entry name" value="TRNA U34 CARBOXYMETHYLTRANSFERASE"/>
    <property type="match status" value="1"/>
</dbReference>
<dbReference type="Pfam" id="PF08003">
    <property type="entry name" value="Methyltransf_9"/>
    <property type="match status" value="1"/>
</dbReference>
<dbReference type="SUPFAM" id="SSF53335">
    <property type="entry name" value="S-adenosyl-L-methionine-dependent methyltransferases"/>
    <property type="match status" value="1"/>
</dbReference>
<organism>
    <name type="scientific">Yersinia pestis bv. Antiqua (strain Angola)</name>
    <dbReference type="NCBI Taxonomy" id="349746"/>
    <lineage>
        <taxon>Bacteria</taxon>
        <taxon>Pseudomonadati</taxon>
        <taxon>Pseudomonadota</taxon>
        <taxon>Gammaproteobacteria</taxon>
        <taxon>Enterobacterales</taxon>
        <taxon>Yersiniaceae</taxon>
        <taxon>Yersinia</taxon>
    </lineage>
</organism>
<protein>
    <recommendedName>
        <fullName evidence="1">tRNA U34 carboxymethyltransferase</fullName>
        <ecNumber evidence="1">2.5.1.-</ecNumber>
    </recommendedName>
</protein>
<proteinExistence type="inferred from homology"/>
<evidence type="ECO:0000255" key="1">
    <source>
        <dbReference type="HAMAP-Rule" id="MF_01590"/>
    </source>
</evidence>